<reference key="1">
    <citation type="journal article" date="2004" name="J. Bacteriol.">
        <title>Comparative genomics of two Leptospira interrogans serovars reveals novel insights into physiology and pathogenesis.</title>
        <authorList>
            <person name="Nascimento A.L.T.O."/>
            <person name="Ko A.I."/>
            <person name="Martins E.A.L."/>
            <person name="Monteiro-Vitorello C.B."/>
            <person name="Ho P.L."/>
            <person name="Haake D.A."/>
            <person name="Verjovski-Almeida S."/>
            <person name="Hartskeerl R.A."/>
            <person name="Marques M.V."/>
            <person name="Oliveira M.C."/>
            <person name="Menck C.F.M."/>
            <person name="Leite L.C.C."/>
            <person name="Carrer H."/>
            <person name="Coutinho L.L."/>
            <person name="Degrave W.M."/>
            <person name="Dellagostin O.A."/>
            <person name="El-Dorry H."/>
            <person name="Ferro E.S."/>
            <person name="Ferro M.I.T."/>
            <person name="Furlan L.R."/>
            <person name="Gamberini M."/>
            <person name="Giglioti E.A."/>
            <person name="Goes-Neto A."/>
            <person name="Goldman G.H."/>
            <person name="Goldman M.H.S."/>
            <person name="Harakava R."/>
            <person name="Jeronimo S.M.B."/>
            <person name="Junqueira-de-Azevedo I.L.M."/>
            <person name="Kimura E.T."/>
            <person name="Kuramae E.E."/>
            <person name="Lemos E.G.M."/>
            <person name="Lemos M.V.F."/>
            <person name="Marino C.L."/>
            <person name="Nunes L.R."/>
            <person name="de Oliveira R.C."/>
            <person name="Pereira G.G."/>
            <person name="Reis M.S."/>
            <person name="Schriefer A."/>
            <person name="Siqueira W.J."/>
            <person name="Sommer P."/>
            <person name="Tsai S.M."/>
            <person name="Simpson A.J.G."/>
            <person name="Ferro J.A."/>
            <person name="Camargo L.E.A."/>
            <person name="Kitajima J.P."/>
            <person name="Setubal J.C."/>
            <person name="Van Sluys M.A."/>
        </authorList>
    </citation>
    <scope>NUCLEOTIDE SEQUENCE [LARGE SCALE GENOMIC DNA]</scope>
    <source>
        <strain>Fiocruz L1-130</strain>
    </source>
</reference>
<sequence>MSFKKAQSHFFLKNPERVRSLQKLSKKIGIKFSKVEYYNTAFIHSSYKNENQEILEDNERLEFLGDSVLGLVAARSLFRKYPKANEGELSRIKSRIVSTPILNSISEKLELSEYLLLGKGEKNSLGKGRRKLSANLFESLVGAIYLDQGFEIAEKFILRHLSEFVENPEKEESVRDYKTQLQEYSQKHFKILPIYRTKSESGPDHAKTFQVVVRIRDQWEASGSGVSKKSAEQNAAKELYNRIRKKT</sequence>
<organism>
    <name type="scientific">Leptospira interrogans serogroup Icterohaemorrhagiae serovar copenhageni (strain Fiocruz L1-130)</name>
    <dbReference type="NCBI Taxonomy" id="267671"/>
    <lineage>
        <taxon>Bacteria</taxon>
        <taxon>Pseudomonadati</taxon>
        <taxon>Spirochaetota</taxon>
        <taxon>Spirochaetia</taxon>
        <taxon>Leptospirales</taxon>
        <taxon>Leptospiraceae</taxon>
        <taxon>Leptospira</taxon>
    </lineage>
</organism>
<keyword id="KW-0963">Cytoplasm</keyword>
<keyword id="KW-0255">Endonuclease</keyword>
<keyword id="KW-0378">Hydrolase</keyword>
<keyword id="KW-0460">Magnesium</keyword>
<keyword id="KW-0479">Metal-binding</keyword>
<keyword id="KW-0507">mRNA processing</keyword>
<keyword id="KW-0540">Nuclease</keyword>
<keyword id="KW-0694">RNA-binding</keyword>
<keyword id="KW-0698">rRNA processing</keyword>
<keyword id="KW-0699">rRNA-binding</keyword>
<keyword id="KW-0819">tRNA processing</keyword>
<name>RNC_LEPIC</name>
<accession>Q75FW5</accession>
<comment type="function">
    <text evidence="1">Digests double-stranded RNA. Involved in the processing of primary rRNA transcript to yield the immediate precursors to the large and small rRNAs (23S and 16S). Processes some mRNAs, and tRNAs when they are encoded in the rRNA operon. Processes pre-crRNA and tracrRNA of type II CRISPR loci if present in the organism.</text>
</comment>
<comment type="catalytic activity">
    <reaction evidence="1">
        <text>Endonucleolytic cleavage to 5'-phosphomonoester.</text>
        <dbReference type="EC" id="3.1.26.3"/>
    </reaction>
</comment>
<comment type="cofactor">
    <cofactor evidence="1">
        <name>Mg(2+)</name>
        <dbReference type="ChEBI" id="CHEBI:18420"/>
    </cofactor>
</comment>
<comment type="subunit">
    <text evidence="1">Homodimer.</text>
</comment>
<comment type="subcellular location">
    <subcellularLocation>
        <location evidence="1">Cytoplasm</location>
    </subcellularLocation>
</comment>
<comment type="similarity">
    <text evidence="1">Belongs to the ribonuclease III family.</text>
</comment>
<proteinExistence type="inferred from homology"/>
<feature type="chain" id="PRO_0000180405" description="Ribonuclease 3">
    <location>
        <begin position="1"/>
        <end position="247"/>
    </location>
</feature>
<feature type="domain" description="RNase III" evidence="1">
    <location>
        <begin position="21"/>
        <end position="149"/>
    </location>
</feature>
<feature type="domain" description="DRBM" evidence="1">
    <location>
        <begin position="176"/>
        <end position="245"/>
    </location>
</feature>
<feature type="active site" evidence="1">
    <location>
        <position position="66"/>
    </location>
</feature>
<feature type="active site" evidence="1">
    <location>
        <position position="138"/>
    </location>
</feature>
<feature type="binding site" evidence="1">
    <location>
        <position position="62"/>
    </location>
    <ligand>
        <name>Mg(2+)</name>
        <dbReference type="ChEBI" id="CHEBI:18420"/>
    </ligand>
</feature>
<feature type="binding site" evidence="1">
    <location>
        <position position="135"/>
    </location>
    <ligand>
        <name>Mg(2+)</name>
        <dbReference type="ChEBI" id="CHEBI:18420"/>
    </ligand>
</feature>
<feature type="binding site" evidence="1">
    <location>
        <position position="138"/>
    </location>
    <ligand>
        <name>Mg(2+)</name>
        <dbReference type="ChEBI" id="CHEBI:18420"/>
    </ligand>
</feature>
<protein>
    <recommendedName>
        <fullName evidence="1">Ribonuclease 3</fullName>
        <ecNumber evidence="1">3.1.26.3</ecNumber>
    </recommendedName>
    <alternativeName>
        <fullName evidence="1">Ribonuclease III</fullName>
        <shortName evidence="1">RNase III</shortName>
    </alternativeName>
</protein>
<evidence type="ECO:0000255" key="1">
    <source>
        <dbReference type="HAMAP-Rule" id="MF_00104"/>
    </source>
</evidence>
<dbReference type="EC" id="3.1.26.3" evidence="1"/>
<dbReference type="EMBL" id="AE016824">
    <property type="protein sequence ID" value="AAS72095.1"/>
    <property type="molecule type" value="Genomic_DNA"/>
</dbReference>
<dbReference type="RefSeq" id="WP_000008630.1">
    <property type="nucleotide sequence ID" value="NC_005824.1"/>
</dbReference>
<dbReference type="SMR" id="Q75FW5"/>
<dbReference type="GeneID" id="61141261"/>
<dbReference type="KEGG" id="lic:LIC_20066"/>
<dbReference type="HOGENOM" id="CLU_000907_1_3_12"/>
<dbReference type="Proteomes" id="UP000007037">
    <property type="component" value="Chromosome II"/>
</dbReference>
<dbReference type="GO" id="GO:0005737">
    <property type="term" value="C:cytoplasm"/>
    <property type="evidence" value="ECO:0007669"/>
    <property type="project" value="UniProtKB-SubCell"/>
</dbReference>
<dbReference type="GO" id="GO:0003725">
    <property type="term" value="F:double-stranded RNA binding"/>
    <property type="evidence" value="ECO:0007669"/>
    <property type="project" value="TreeGrafter"/>
</dbReference>
<dbReference type="GO" id="GO:0046872">
    <property type="term" value="F:metal ion binding"/>
    <property type="evidence" value="ECO:0007669"/>
    <property type="project" value="UniProtKB-KW"/>
</dbReference>
<dbReference type="GO" id="GO:0004525">
    <property type="term" value="F:ribonuclease III activity"/>
    <property type="evidence" value="ECO:0007669"/>
    <property type="project" value="UniProtKB-UniRule"/>
</dbReference>
<dbReference type="GO" id="GO:0019843">
    <property type="term" value="F:rRNA binding"/>
    <property type="evidence" value="ECO:0007669"/>
    <property type="project" value="UniProtKB-KW"/>
</dbReference>
<dbReference type="GO" id="GO:0006397">
    <property type="term" value="P:mRNA processing"/>
    <property type="evidence" value="ECO:0007669"/>
    <property type="project" value="UniProtKB-UniRule"/>
</dbReference>
<dbReference type="GO" id="GO:0010468">
    <property type="term" value="P:regulation of gene expression"/>
    <property type="evidence" value="ECO:0007669"/>
    <property type="project" value="TreeGrafter"/>
</dbReference>
<dbReference type="GO" id="GO:0006364">
    <property type="term" value="P:rRNA processing"/>
    <property type="evidence" value="ECO:0007669"/>
    <property type="project" value="UniProtKB-UniRule"/>
</dbReference>
<dbReference type="GO" id="GO:0008033">
    <property type="term" value="P:tRNA processing"/>
    <property type="evidence" value="ECO:0007669"/>
    <property type="project" value="UniProtKB-KW"/>
</dbReference>
<dbReference type="CDD" id="cd10845">
    <property type="entry name" value="DSRM_RNAse_III_family"/>
    <property type="match status" value="1"/>
</dbReference>
<dbReference type="CDD" id="cd00593">
    <property type="entry name" value="RIBOc"/>
    <property type="match status" value="1"/>
</dbReference>
<dbReference type="FunFam" id="1.10.1520.10:FF:000001">
    <property type="entry name" value="Ribonuclease 3"/>
    <property type="match status" value="1"/>
</dbReference>
<dbReference type="FunFam" id="3.30.160.20:FF:000003">
    <property type="entry name" value="Ribonuclease 3"/>
    <property type="match status" value="1"/>
</dbReference>
<dbReference type="Gene3D" id="3.30.160.20">
    <property type="match status" value="1"/>
</dbReference>
<dbReference type="Gene3D" id="1.10.1520.10">
    <property type="entry name" value="Ribonuclease III domain"/>
    <property type="match status" value="1"/>
</dbReference>
<dbReference type="HAMAP" id="MF_00104">
    <property type="entry name" value="RNase_III"/>
    <property type="match status" value="1"/>
</dbReference>
<dbReference type="InterPro" id="IPR014720">
    <property type="entry name" value="dsRBD_dom"/>
</dbReference>
<dbReference type="InterPro" id="IPR011907">
    <property type="entry name" value="RNase_III"/>
</dbReference>
<dbReference type="InterPro" id="IPR000999">
    <property type="entry name" value="RNase_III_dom"/>
</dbReference>
<dbReference type="InterPro" id="IPR036389">
    <property type="entry name" value="RNase_III_sf"/>
</dbReference>
<dbReference type="NCBIfam" id="TIGR02191">
    <property type="entry name" value="RNaseIII"/>
    <property type="match status" value="1"/>
</dbReference>
<dbReference type="PANTHER" id="PTHR11207:SF0">
    <property type="entry name" value="RIBONUCLEASE 3"/>
    <property type="match status" value="1"/>
</dbReference>
<dbReference type="PANTHER" id="PTHR11207">
    <property type="entry name" value="RIBONUCLEASE III"/>
    <property type="match status" value="1"/>
</dbReference>
<dbReference type="Pfam" id="PF00035">
    <property type="entry name" value="dsrm"/>
    <property type="match status" value="1"/>
</dbReference>
<dbReference type="Pfam" id="PF14622">
    <property type="entry name" value="Ribonucleas_3_3"/>
    <property type="match status" value="1"/>
</dbReference>
<dbReference type="SMART" id="SM00358">
    <property type="entry name" value="DSRM"/>
    <property type="match status" value="1"/>
</dbReference>
<dbReference type="SMART" id="SM00535">
    <property type="entry name" value="RIBOc"/>
    <property type="match status" value="1"/>
</dbReference>
<dbReference type="SUPFAM" id="SSF54768">
    <property type="entry name" value="dsRNA-binding domain-like"/>
    <property type="match status" value="1"/>
</dbReference>
<dbReference type="SUPFAM" id="SSF69065">
    <property type="entry name" value="RNase III domain-like"/>
    <property type="match status" value="1"/>
</dbReference>
<dbReference type="PROSITE" id="PS50137">
    <property type="entry name" value="DS_RBD"/>
    <property type="match status" value="1"/>
</dbReference>
<dbReference type="PROSITE" id="PS00517">
    <property type="entry name" value="RNASE_3_1"/>
    <property type="match status" value="1"/>
</dbReference>
<dbReference type="PROSITE" id="PS50142">
    <property type="entry name" value="RNASE_3_2"/>
    <property type="match status" value="1"/>
</dbReference>
<gene>
    <name evidence="1" type="primary">rnc</name>
    <name type="ordered locus">LIC_20066</name>
</gene>